<gene>
    <name type="primary">RPS27B</name>
    <name type="synonym">ARS27A</name>
    <name type="ordered locus">At3g61110</name>
    <name type="ORF">T20K12.10</name>
    <name type="ORF">T27I15_200</name>
</gene>
<protein>
    <recommendedName>
        <fullName evidence="3">Small ribosomal subunit protein eS27y</fullName>
    </recommendedName>
    <alternativeName>
        <fullName>40S ribosomal protein S27-2</fullName>
    </alternativeName>
</protein>
<organism>
    <name type="scientific">Arabidopsis thaliana</name>
    <name type="common">Mouse-ear cress</name>
    <dbReference type="NCBI Taxonomy" id="3702"/>
    <lineage>
        <taxon>Eukaryota</taxon>
        <taxon>Viridiplantae</taxon>
        <taxon>Streptophyta</taxon>
        <taxon>Embryophyta</taxon>
        <taxon>Tracheophyta</taxon>
        <taxon>Spermatophyta</taxon>
        <taxon>Magnoliopsida</taxon>
        <taxon>eudicotyledons</taxon>
        <taxon>Gunneridae</taxon>
        <taxon>Pentapetalae</taxon>
        <taxon>rosids</taxon>
        <taxon>malvids</taxon>
        <taxon>Brassicales</taxon>
        <taxon>Brassicaceae</taxon>
        <taxon>Camelineae</taxon>
        <taxon>Arabidopsis</taxon>
    </lineage>
</organism>
<name>RS272_ARATH</name>
<sequence>MVLQNDIDLLNPPAELEKRKHKLKRLVQSPNSFFMDVKCQGCFNITTVFSHSQTVVVCGNCQTILCQPTGGKAKLTEGCSFRRKGD</sequence>
<feature type="chain" id="PRO_0000149060" description="Small ribosomal subunit protein eS27y">
    <location>
        <begin position="1"/>
        <end position="86"/>
    </location>
</feature>
<feature type="zinc finger region" description="C4-type" evidence="1">
    <location>
        <begin position="39"/>
        <end position="61"/>
    </location>
</feature>
<proteinExistence type="evidence at transcript level"/>
<dbReference type="EMBL" id="AF083336">
    <property type="protein sequence ID" value="AAD10029.1"/>
    <property type="molecule type" value="mRNA"/>
</dbReference>
<dbReference type="EMBL" id="AF083337">
    <property type="protein sequence ID" value="AAD10030.1"/>
    <property type="molecule type" value="Genomic_DNA"/>
</dbReference>
<dbReference type="EMBL" id="AL137898">
    <property type="protein sequence ID" value="CAB71041.1"/>
    <property type="molecule type" value="Genomic_DNA"/>
</dbReference>
<dbReference type="EMBL" id="AL358732">
    <property type="protein sequence ID" value="CAB94147.1"/>
    <property type="molecule type" value="Genomic_DNA"/>
</dbReference>
<dbReference type="EMBL" id="CP002686">
    <property type="protein sequence ID" value="AEE80154.1"/>
    <property type="molecule type" value="Genomic_DNA"/>
</dbReference>
<dbReference type="EMBL" id="AF412053">
    <property type="protein sequence ID" value="AAL06506.1"/>
    <property type="molecule type" value="mRNA"/>
</dbReference>
<dbReference type="EMBL" id="AY090259">
    <property type="protein sequence ID" value="AAL90920.1"/>
    <property type="molecule type" value="mRNA"/>
</dbReference>
<dbReference type="PIR" id="T47903">
    <property type="entry name" value="T47903"/>
</dbReference>
<dbReference type="PIR" id="T50532">
    <property type="entry name" value="T50532"/>
</dbReference>
<dbReference type="RefSeq" id="NP_191670.1">
    <property type="nucleotide sequence ID" value="NM_115975.6"/>
</dbReference>
<dbReference type="SMR" id="Q9M2F1"/>
<dbReference type="BioGRID" id="10597">
    <property type="interactions" value="10"/>
</dbReference>
<dbReference type="FunCoup" id="Q9M2F1">
    <property type="interactions" value="2821"/>
</dbReference>
<dbReference type="STRING" id="3702.Q9M2F1"/>
<dbReference type="iPTMnet" id="Q9M2F1"/>
<dbReference type="PaxDb" id="3702-AT3G61110.1"/>
<dbReference type="ProteomicsDB" id="237019"/>
<dbReference type="EnsemblPlants" id="AT3G61110.1">
    <property type="protein sequence ID" value="AT3G61110.1"/>
    <property type="gene ID" value="AT3G61110"/>
</dbReference>
<dbReference type="GeneID" id="825283"/>
<dbReference type="Gramene" id="AT3G61110.1">
    <property type="protein sequence ID" value="AT3G61110.1"/>
    <property type="gene ID" value="AT3G61110"/>
</dbReference>
<dbReference type="KEGG" id="ath:AT3G61110"/>
<dbReference type="Araport" id="AT3G61110"/>
<dbReference type="TAIR" id="AT3G61110">
    <property type="gene designation" value="RS27A"/>
</dbReference>
<dbReference type="eggNOG" id="KOG1779">
    <property type="taxonomic scope" value="Eukaryota"/>
</dbReference>
<dbReference type="HOGENOM" id="CLU_130128_3_0_1"/>
<dbReference type="InParanoid" id="Q9M2F1"/>
<dbReference type="OMA" id="YQDEWET"/>
<dbReference type="OrthoDB" id="1074330at2759"/>
<dbReference type="PhylomeDB" id="Q9M2F1"/>
<dbReference type="PRO" id="PR:Q9M2F1"/>
<dbReference type="Proteomes" id="UP000006548">
    <property type="component" value="Chromosome 3"/>
</dbReference>
<dbReference type="ExpressionAtlas" id="Q9M2F1">
    <property type="expression patterns" value="baseline and differential"/>
</dbReference>
<dbReference type="GO" id="GO:0022626">
    <property type="term" value="C:cytosolic ribosome"/>
    <property type="evidence" value="ECO:0007005"/>
    <property type="project" value="TAIR"/>
</dbReference>
<dbReference type="GO" id="GO:0022627">
    <property type="term" value="C:cytosolic small ribosomal subunit"/>
    <property type="evidence" value="ECO:0007005"/>
    <property type="project" value="TAIR"/>
</dbReference>
<dbReference type="GO" id="GO:0009505">
    <property type="term" value="C:plant-type cell wall"/>
    <property type="evidence" value="ECO:0007005"/>
    <property type="project" value="TAIR"/>
</dbReference>
<dbReference type="GO" id="GO:0009506">
    <property type="term" value="C:plasmodesma"/>
    <property type="evidence" value="ECO:0007005"/>
    <property type="project" value="TAIR"/>
</dbReference>
<dbReference type="GO" id="GO:0005840">
    <property type="term" value="C:ribosome"/>
    <property type="evidence" value="ECO:0000250"/>
    <property type="project" value="TAIR"/>
</dbReference>
<dbReference type="GO" id="GO:0003729">
    <property type="term" value="F:mRNA binding"/>
    <property type="evidence" value="ECO:0000314"/>
    <property type="project" value="TAIR"/>
</dbReference>
<dbReference type="GO" id="GO:0003735">
    <property type="term" value="F:structural constituent of ribosome"/>
    <property type="evidence" value="ECO:0000314"/>
    <property type="project" value="CAFA"/>
</dbReference>
<dbReference type="GO" id="GO:0008270">
    <property type="term" value="F:zinc ion binding"/>
    <property type="evidence" value="ECO:0007669"/>
    <property type="project" value="UniProtKB-KW"/>
</dbReference>
<dbReference type="GO" id="GO:0006412">
    <property type="term" value="P:translation"/>
    <property type="evidence" value="ECO:0007669"/>
    <property type="project" value="InterPro"/>
</dbReference>
<dbReference type="FunFam" id="2.20.25.100:FF:000001">
    <property type="entry name" value="40S ribosomal protein S27"/>
    <property type="match status" value="1"/>
</dbReference>
<dbReference type="Gene3D" id="2.20.25.100">
    <property type="entry name" value="Zn-binding ribosomal proteins"/>
    <property type="match status" value="1"/>
</dbReference>
<dbReference type="HAMAP" id="MF_00371">
    <property type="entry name" value="Ribosomal_eS27"/>
    <property type="match status" value="1"/>
</dbReference>
<dbReference type="InterPro" id="IPR000592">
    <property type="entry name" value="Ribosomal_eS27"/>
</dbReference>
<dbReference type="InterPro" id="IPR023407">
    <property type="entry name" value="Ribosomal_eS27_Zn-bd_dom_sf"/>
</dbReference>
<dbReference type="InterPro" id="IPR011332">
    <property type="entry name" value="Ribosomal_zn-bd"/>
</dbReference>
<dbReference type="PANTHER" id="PTHR11594">
    <property type="entry name" value="40S RIBOSOMAL PROTEIN S27"/>
    <property type="match status" value="1"/>
</dbReference>
<dbReference type="Pfam" id="PF01667">
    <property type="entry name" value="Ribosomal_S27e"/>
    <property type="match status" value="1"/>
</dbReference>
<dbReference type="SUPFAM" id="SSF57829">
    <property type="entry name" value="Zn-binding ribosomal proteins"/>
    <property type="match status" value="1"/>
</dbReference>
<dbReference type="PROSITE" id="PS01168">
    <property type="entry name" value="RIBOSOMAL_S27E"/>
    <property type="match status" value="1"/>
</dbReference>
<reference key="1">
    <citation type="journal article" date="1999" name="EMBO J.">
        <title>Involvement of Arabidopsis thaliana ribosomal protein S27 in mRNA degradation triggered by genotoxic stress.</title>
        <authorList>
            <person name="Revenkova E."/>
            <person name="Masson J."/>
            <person name="Koncz C."/>
            <person name="Afsar K."/>
            <person name="Jakovleva L."/>
            <person name="Paszkowski J."/>
        </authorList>
    </citation>
    <scope>NUCLEOTIDE SEQUENCE [GENOMIC DNA / MRNA]</scope>
    <scope>FUNCTION</scope>
    <scope>INDUCTION</scope>
    <source>
        <strain>cv. Columbia</strain>
        <strain>cv. Landsberg erecta</strain>
    </source>
</reference>
<reference key="2">
    <citation type="journal article" date="2000" name="Nature">
        <title>Sequence and analysis of chromosome 3 of the plant Arabidopsis thaliana.</title>
        <authorList>
            <person name="Salanoubat M."/>
            <person name="Lemcke K."/>
            <person name="Rieger M."/>
            <person name="Ansorge W."/>
            <person name="Unseld M."/>
            <person name="Fartmann B."/>
            <person name="Valle G."/>
            <person name="Bloecker H."/>
            <person name="Perez-Alonso M."/>
            <person name="Obermaier B."/>
            <person name="Delseny M."/>
            <person name="Boutry M."/>
            <person name="Grivell L.A."/>
            <person name="Mache R."/>
            <person name="Puigdomenech P."/>
            <person name="De Simone V."/>
            <person name="Choisne N."/>
            <person name="Artiguenave F."/>
            <person name="Robert C."/>
            <person name="Brottier P."/>
            <person name="Wincker P."/>
            <person name="Cattolico L."/>
            <person name="Weissenbach J."/>
            <person name="Saurin W."/>
            <person name="Quetier F."/>
            <person name="Schaefer M."/>
            <person name="Mueller-Auer S."/>
            <person name="Gabel C."/>
            <person name="Fuchs M."/>
            <person name="Benes V."/>
            <person name="Wurmbach E."/>
            <person name="Drzonek H."/>
            <person name="Erfle H."/>
            <person name="Jordan N."/>
            <person name="Bangert S."/>
            <person name="Wiedelmann R."/>
            <person name="Kranz H."/>
            <person name="Voss H."/>
            <person name="Holland R."/>
            <person name="Brandt P."/>
            <person name="Nyakatura G."/>
            <person name="Vezzi A."/>
            <person name="D'Angelo M."/>
            <person name="Pallavicini A."/>
            <person name="Toppo S."/>
            <person name="Simionati B."/>
            <person name="Conrad A."/>
            <person name="Hornischer K."/>
            <person name="Kauer G."/>
            <person name="Loehnert T.-H."/>
            <person name="Nordsiek G."/>
            <person name="Reichelt J."/>
            <person name="Scharfe M."/>
            <person name="Schoen O."/>
            <person name="Bargues M."/>
            <person name="Terol J."/>
            <person name="Climent J."/>
            <person name="Navarro P."/>
            <person name="Collado C."/>
            <person name="Perez-Perez A."/>
            <person name="Ottenwaelder B."/>
            <person name="Duchemin D."/>
            <person name="Cooke R."/>
            <person name="Laudie M."/>
            <person name="Berger-Llauro C."/>
            <person name="Purnelle B."/>
            <person name="Masuy D."/>
            <person name="de Haan M."/>
            <person name="Maarse A.C."/>
            <person name="Alcaraz J.-P."/>
            <person name="Cottet A."/>
            <person name="Casacuberta E."/>
            <person name="Monfort A."/>
            <person name="Argiriou A."/>
            <person name="Flores M."/>
            <person name="Liguori R."/>
            <person name="Vitale D."/>
            <person name="Mannhaupt G."/>
            <person name="Haase D."/>
            <person name="Schoof H."/>
            <person name="Rudd S."/>
            <person name="Zaccaria P."/>
            <person name="Mewes H.-W."/>
            <person name="Mayer K.F.X."/>
            <person name="Kaul S."/>
            <person name="Town C.D."/>
            <person name="Koo H.L."/>
            <person name="Tallon L.J."/>
            <person name="Jenkins J."/>
            <person name="Rooney T."/>
            <person name="Rizzo M."/>
            <person name="Walts A."/>
            <person name="Utterback T."/>
            <person name="Fujii C.Y."/>
            <person name="Shea T.P."/>
            <person name="Creasy T.H."/>
            <person name="Haas B."/>
            <person name="Maiti R."/>
            <person name="Wu D."/>
            <person name="Peterson J."/>
            <person name="Van Aken S."/>
            <person name="Pai G."/>
            <person name="Militscher J."/>
            <person name="Sellers P."/>
            <person name="Gill J.E."/>
            <person name="Feldblyum T.V."/>
            <person name="Preuss D."/>
            <person name="Lin X."/>
            <person name="Nierman W.C."/>
            <person name="Salzberg S.L."/>
            <person name="White O."/>
            <person name="Venter J.C."/>
            <person name="Fraser C.M."/>
            <person name="Kaneko T."/>
            <person name="Nakamura Y."/>
            <person name="Sato S."/>
            <person name="Kato T."/>
            <person name="Asamizu E."/>
            <person name="Sasamoto S."/>
            <person name="Kimura T."/>
            <person name="Idesawa K."/>
            <person name="Kawashima K."/>
            <person name="Kishida Y."/>
            <person name="Kiyokawa C."/>
            <person name="Kohara M."/>
            <person name="Matsumoto M."/>
            <person name="Matsuno A."/>
            <person name="Muraki A."/>
            <person name="Nakayama S."/>
            <person name="Nakazaki N."/>
            <person name="Shinpo S."/>
            <person name="Takeuchi C."/>
            <person name="Wada T."/>
            <person name="Watanabe A."/>
            <person name="Yamada M."/>
            <person name="Yasuda M."/>
            <person name="Tabata S."/>
        </authorList>
    </citation>
    <scope>NUCLEOTIDE SEQUENCE [LARGE SCALE GENOMIC DNA]</scope>
    <source>
        <strain>cv. Columbia</strain>
    </source>
</reference>
<reference key="3">
    <citation type="journal article" date="2017" name="Plant J.">
        <title>Araport11: a complete reannotation of the Arabidopsis thaliana reference genome.</title>
        <authorList>
            <person name="Cheng C.Y."/>
            <person name="Krishnakumar V."/>
            <person name="Chan A.P."/>
            <person name="Thibaud-Nissen F."/>
            <person name="Schobel S."/>
            <person name="Town C.D."/>
        </authorList>
    </citation>
    <scope>GENOME REANNOTATION</scope>
    <source>
        <strain>cv. Columbia</strain>
    </source>
</reference>
<reference key="4">
    <citation type="journal article" date="2003" name="Science">
        <title>Empirical analysis of transcriptional activity in the Arabidopsis genome.</title>
        <authorList>
            <person name="Yamada K."/>
            <person name="Lim J."/>
            <person name="Dale J.M."/>
            <person name="Chen H."/>
            <person name="Shinn P."/>
            <person name="Palm C.J."/>
            <person name="Southwick A.M."/>
            <person name="Wu H.C."/>
            <person name="Kim C.J."/>
            <person name="Nguyen M."/>
            <person name="Pham P.K."/>
            <person name="Cheuk R.F."/>
            <person name="Karlin-Newmann G."/>
            <person name="Liu S.X."/>
            <person name="Lam B."/>
            <person name="Sakano H."/>
            <person name="Wu T."/>
            <person name="Yu G."/>
            <person name="Miranda M."/>
            <person name="Quach H.L."/>
            <person name="Tripp M."/>
            <person name="Chang C.H."/>
            <person name="Lee J.M."/>
            <person name="Toriumi M.J."/>
            <person name="Chan M.M."/>
            <person name="Tang C.C."/>
            <person name="Onodera C.S."/>
            <person name="Deng J.M."/>
            <person name="Akiyama K."/>
            <person name="Ansari Y."/>
            <person name="Arakawa T."/>
            <person name="Banh J."/>
            <person name="Banno F."/>
            <person name="Bowser L."/>
            <person name="Brooks S.Y."/>
            <person name="Carninci P."/>
            <person name="Chao Q."/>
            <person name="Choy N."/>
            <person name="Enju A."/>
            <person name="Goldsmith A.D."/>
            <person name="Gurjal M."/>
            <person name="Hansen N.F."/>
            <person name="Hayashizaki Y."/>
            <person name="Johnson-Hopson C."/>
            <person name="Hsuan V.W."/>
            <person name="Iida K."/>
            <person name="Karnes M."/>
            <person name="Khan S."/>
            <person name="Koesema E."/>
            <person name="Ishida J."/>
            <person name="Jiang P.X."/>
            <person name="Jones T."/>
            <person name="Kawai J."/>
            <person name="Kamiya A."/>
            <person name="Meyers C."/>
            <person name="Nakajima M."/>
            <person name="Narusaka M."/>
            <person name="Seki M."/>
            <person name="Sakurai T."/>
            <person name="Satou M."/>
            <person name="Tamse R."/>
            <person name="Vaysberg M."/>
            <person name="Wallender E.K."/>
            <person name="Wong C."/>
            <person name="Yamamura Y."/>
            <person name="Yuan S."/>
            <person name="Shinozaki K."/>
            <person name="Davis R.W."/>
            <person name="Theologis A."/>
            <person name="Ecker J.R."/>
        </authorList>
    </citation>
    <scope>NUCLEOTIDE SEQUENCE [LARGE SCALE MRNA]</scope>
    <source>
        <strain>cv. Columbia</strain>
    </source>
</reference>
<reference key="5">
    <citation type="journal article" date="2001" name="Plant Physiol.">
        <title>The organization of cytoplasmic ribosomal protein genes in the Arabidopsis genome.</title>
        <authorList>
            <person name="Barakat A."/>
            <person name="Szick-Miranda K."/>
            <person name="Chang I.-F."/>
            <person name="Guyot R."/>
            <person name="Blanc G."/>
            <person name="Cooke R."/>
            <person name="Delseny M."/>
            <person name="Bailey-Serres J."/>
        </authorList>
    </citation>
    <scope>GENE FAMILY ORGANIZATION</scope>
    <scope>NOMENCLATURE</scope>
</reference>
<reference key="6">
    <citation type="journal article" date="2023" name="Plant Cell">
        <title>An updated nomenclature for plant ribosomal protein genes.</title>
        <authorList>
            <person name="Scarpin M.R."/>
            <person name="Busche M."/>
            <person name="Martinez R.E."/>
            <person name="Harper L.C."/>
            <person name="Reiser L."/>
            <person name="Szakonyi D."/>
            <person name="Merchante C."/>
            <person name="Lan T."/>
            <person name="Xiong W."/>
            <person name="Mo B."/>
            <person name="Tang G."/>
            <person name="Chen X."/>
            <person name="Bailey-Serres J."/>
            <person name="Browning K.S."/>
            <person name="Brunkard J.O."/>
        </authorList>
    </citation>
    <scope>NOMENCLATURE</scope>
</reference>
<evidence type="ECO:0000255" key="1"/>
<evidence type="ECO:0000269" key="2">
    <source>
    </source>
</evidence>
<evidence type="ECO:0000303" key="3">
    <source>
    </source>
</evidence>
<evidence type="ECO:0000305" key="4"/>
<comment type="function">
    <text evidence="2">May be involved in the elimination of damaged mRNA after UV irradiation.</text>
</comment>
<comment type="cofactor">
    <cofactor evidence="4">
        <name>Zn(2+)</name>
        <dbReference type="ChEBI" id="CHEBI:29105"/>
    </cofactor>
    <text evidence="4">Binds 1 zinc ion per subunit.</text>
</comment>
<comment type="induction">
    <text evidence="2">Down-regulated by UV-C treatment.</text>
</comment>
<comment type="similarity">
    <text evidence="4">Belongs to the eukaryotic ribosomal protein eS27 family.</text>
</comment>
<keyword id="KW-0479">Metal-binding</keyword>
<keyword id="KW-1185">Reference proteome</keyword>
<keyword id="KW-0687">Ribonucleoprotein</keyword>
<keyword id="KW-0689">Ribosomal protein</keyword>
<keyword id="KW-0862">Zinc</keyword>
<keyword id="KW-0863">Zinc-finger</keyword>
<accession>Q9M2F1</accession>
<accession>Q9ZNS3</accession>